<reference key="1">
    <citation type="journal article" date="1994" name="Eur. J. Biochem.">
        <title>Alcohol dehydrogenase class III contrasted to class I. Characterization of the cyclostome enzyme, the existence of multiple forms as for the human enzyme, and distant cross-species hybridization.</title>
        <authorList>
            <person name="Danielsson O."/>
            <person name="Shafqat J."/>
            <person name="Estonius M."/>
            <person name="Joernvall H."/>
        </authorList>
    </citation>
    <scope>PROTEIN SEQUENCE</scope>
    <scope>TISSUE SPECIFICITY</scope>
    <scope>ACETYLATION AT SER-1</scope>
    <source>
        <tissue>Liver</tissue>
    </source>
</reference>
<reference key="2">
    <citation type="journal article" date="1995" name="FEBS Lett.">
        <title>Multiplicity of N-terminal structures of medium-chain alcohol dehydrogenases. Mass-spectrometric analysis of plant, lower vertebrate and higher vertebrate class I, II, and III forms of the enzyme.</title>
        <authorList>
            <person name="Hjelmqvist L."/>
            <person name="Hackett M."/>
            <person name="Shafqat J."/>
            <person name="Danielsson O."/>
            <person name="Iida J."/>
            <person name="Hendrickson R.C."/>
            <person name="Michel H."/>
            <person name="Shabanowitz J."/>
            <person name="Hunt D.F."/>
            <person name="Joernvall H."/>
        </authorList>
    </citation>
    <scope>PARTIAL PROTEIN SEQUENCE</scope>
    <scope>ACETYLATION AT SER-1</scope>
</reference>
<keyword id="KW-0007">Acetylation</keyword>
<keyword id="KW-0963">Cytoplasm</keyword>
<keyword id="KW-0903">Direct protein sequencing</keyword>
<keyword id="KW-0479">Metal-binding</keyword>
<keyword id="KW-0520">NAD</keyword>
<keyword id="KW-0560">Oxidoreductase</keyword>
<keyword id="KW-0862">Zinc</keyword>
<comment type="function">
    <text evidence="1 2">Class-III ADH is remarkably ineffective in oxidizing ethanol, but it readily catalyzes the oxidation of long-chain primary alcohols and the oxidation of S-(hydroxymethyl) glutathione. Also acts as a S-nitroso-glutathione reductase by catalyzing the NADH-dependent reduction of S-nitrosoglutathione, thereby regulating protein S-nitrosylation (By similarity).</text>
</comment>
<comment type="catalytic activity">
    <reaction evidence="1">
        <text>a primary alcohol + NAD(+) = an aldehyde + NADH + H(+)</text>
        <dbReference type="Rhea" id="RHEA:10736"/>
        <dbReference type="ChEBI" id="CHEBI:15378"/>
        <dbReference type="ChEBI" id="CHEBI:15734"/>
        <dbReference type="ChEBI" id="CHEBI:17478"/>
        <dbReference type="ChEBI" id="CHEBI:57540"/>
        <dbReference type="ChEBI" id="CHEBI:57945"/>
        <dbReference type="EC" id="1.1.1.1"/>
    </reaction>
</comment>
<comment type="catalytic activity">
    <reaction evidence="1">
        <text>a secondary alcohol + NAD(+) = a ketone + NADH + H(+)</text>
        <dbReference type="Rhea" id="RHEA:10740"/>
        <dbReference type="ChEBI" id="CHEBI:15378"/>
        <dbReference type="ChEBI" id="CHEBI:17087"/>
        <dbReference type="ChEBI" id="CHEBI:35681"/>
        <dbReference type="ChEBI" id="CHEBI:57540"/>
        <dbReference type="ChEBI" id="CHEBI:57945"/>
        <dbReference type="EC" id="1.1.1.1"/>
    </reaction>
</comment>
<comment type="catalytic activity">
    <reaction evidence="1">
        <text>S-(hydroxymethyl)glutathione + NADP(+) = S-formylglutathione + NADPH + H(+)</text>
        <dbReference type="Rhea" id="RHEA:19981"/>
        <dbReference type="ChEBI" id="CHEBI:15378"/>
        <dbReference type="ChEBI" id="CHEBI:57688"/>
        <dbReference type="ChEBI" id="CHEBI:57783"/>
        <dbReference type="ChEBI" id="CHEBI:58349"/>
        <dbReference type="ChEBI" id="CHEBI:58758"/>
        <dbReference type="EC" id="1.1.1.284"/>
    </reaction>
</comment>
<comment type="catalytic activity">
    <reaction evidence="1">
        <text>S-(hydroxymethyl)glutathione + NAD(+) = S-formylglutathione + NADH + H(+)</text>
        <dbReference type="Rhea" id="RHEA:19985"/>
        <dbReference type="ChEBI" id="CHEBI:15378"/>
        <dbReference type="ChEBI" id="CHEBI:57540"/>
        <dbReference type="ChEBI" id="CHEBI:57688"/>
        <dbReference type="ChEBI" id="CHEBI:57945"/>
        <dbReference type="ChEBI" id="CHEBI:58758"/>
        <dbReference type="EC" id="1.1.1.284"/>
    </reaction>
</comment>
<comment type="catalytic activity">
    <reaction evidence="2">
        <text>S-nitrosoglutathione + NADH + H(+) = S-(hydroxysulfenamide)glutathione + NAD(+)</text>
        <dbReference type="Rhea" id="RHEA:78371"/>
        <dbReference type="ChEBI" id="CHEBI:15378"/>
        <dbReference type="ChEBI" id="CHEBI:57540"/>
        <dbReference type="ChEBI" id="CHEBI:57945"/>
        <dbReference type="ChEBI" id="CHEBI:145544"/>
        <dbReference type="ChEBI" id="CHEBI:229723"/>
    </reaction>
    <physiologicalReaction direction="left-to-right" evidence="2">
        <dbReference type="Rhea" id="RHEA:78372"/>
    </physiologicalReaction>
</comment>
<comment type="cofactor">
    <cofactor evidence="1">
        <name>Zn(2+)</name>
        <dbReference type="ChEBI" id="CHEBI:29105"/>
    </cofactor>
    <text evidence="1">Binds 2 Zn(2+) ions per subunit.</text>
</comment>
<comment type="subunit">
    <text evidence="1">Homodimer.</text>
</comment>
<comment type="subcellular location">
    <subcellularLocation>
        <location evidence="5">Cytoplasm</location>
    </subcellularLocation>
</comment>
<comment type="tissue specificity">
    <text evidence="4">Liver and gut.</text>
</comment>
<comment type="similarity">
    <text evidence="5">Belongs to the zinc-containing alcohol dehydrogenase family. Class-III subfamily.</text>
</comment>
<accession>P80360</accession>
<dbReference type="EC" id="1.1.1.1" evidence="1"/>
<dbReference type="EC" id="1.1.1.-"/>
<dbReference type="EC" id="1.1.1.284" evidence="1"/>
<dbReference type="PIR" id="S51187">
    <property type="entry name" value="S51187"/>
</dbReference>
<dbReference type="SMR" id="P80360"/>
<dbReference type="iPTMnet" id="P80360"/>
<dbReference type="GO" id="GO:0005829">
    <property type="term" value="C:cytosol"/>
    <property type="evidence" value="ECO:0007669"/>
    <property type="project" value="TreeGrafter"/>
</dbReference>
<dbReference type="GO" id="GO:0004022">
    <property type="term" value="F:alcohol dehydrogenase (NAD+) activity"/>
    <property type="evidence" value="ECO:0007669"/>
    <property type="project" value="UniProtKB-EC"/>
</dbReference>
<dbReference type="GO" id="GO:0106322">
    <property type="term" value="F:S-(hydroxymethyl)glutathione dehydrogenase (NAD+) activity"/>
    <property type="evidence" value="ECO:0007669"/>
    <property type="project" value="RHEA"/>
</dbReference>
<dbReference type="GO" id="GO:0106321">
    <property type="term" value="F:S-(hydroxymethyl)glutathione dehydrogenase (NADP+) activity"/>
    <property type="evidence" value="ECO:0007669"/>
    <property type="project" value="RHEA"/>
</dbReference>
<dbReference type="GO" id="GO:0080007">
    <property type="term" value="F:S-nitrosoglutathione reductase (NADH) activity"/>
    <property type="evidence" value="ECO:0007669"/>
    <property type="project" value="RHEA"/>
</dbReference>
<dbReference type="GO" id="GO:0008270">
    <property type="term" value="F:zinc ion binding"/>
    <property type="evidence" value="ECO:0007669"/>
    <property type="project" value="InterPro"/>
</dbReference>
<dbReference type="GO" id="GO:0046294">
    <property type="term" value="P:formaldehyde catabolic process"/>
    <property type="evidence" value="ECO:0007669"/>
    <property type="project" value="InterPro"/>
</dbReference>
<dbReference type="CDD" id="cd08300">
    <property type="entry name" value="alcohol_DH_class_III"/>
    <property type="match status" value="1"/>
</dbReference>
<dbReference type="FunFam" id="3.40.50.720:FF:000003">
    <property type="entry name" value="S-(hydroxymethyl)glutathione dehydrogenase"/>
    <property type="match status" value="1"/>
</dbReference>
<dbReference type="FunFam" id="3.90.180.10:FF:000001">
    <property type="entry name" value="S-(hydroxymethyl)glutathione dehydrogenase"/>
    <property type="match status" value="1"/>
</dbReference>
<dbReference type="Gene3D" id="3.90.180.10">
    <property type="entry name" value="Medium-chain alcohol dehydrogenases, catalytic domain"/>
    <property type="match status" value="1"/>
</dbReference>
<dbReference type="Gene3D" id="3.40.50.720">
    <property type="entry name" value="NAD(P)-binding Rossmann-like Domain"/>
    <property type="match status" value="1"/>
</dbReference>
<dbReference type="InterPro" id="IPR013149">
    <property type="entry name" value="ADH-like_C"/>
</dbReference>
<dbReference type="InterPro" id="IPR013154">
    <property type="entry name" value="ADH-like_N"/>
</dbReference>
<dbReference type="InterPro" id="IPR014183">
    <property type="entry name" value="ADH_3"/>
</dbReference>
<dbReference type="InterPro" id="IPR002328">
    <property type="entry name" value="ADH_Zn_CS"/>
</dbReference>
<dbReference type="InterPro" id="IPR011032">
    <property type="entry name" value="GroES-like_sf"/>
</dbReference>
<dbReference type="InterPro" id="IPR036291">
    <property type="entry name" value="NAD(P)-bd_dom_sf"/>
</dbReference>
<dbReference type="InterPro" id="IPR020843">
    <property type="entry name" value="PKS_ER"/>
</dbReference>
<dbReference type="NCBIfam" id="TIGR02818">
    <property type="entry name" value="adh_III_F_hyde"/>
    <property type="match status" value="1"/>
</dbReference>
<dbReference type="PANTHER" id="PTHR43880">
    <property type="entry name" value="ALCOHOL DEHYDROGENASE"/>
    <property type="match status" value="1"/>
</dbReference>
<dbReference type="PANTHER" id="PTHR43880:SF12">
    <property type="entry name" value="ALCOHOL DEHYDROGENASE CLASS-3"/>
    <property type="match status" value="1"/>
</dbReference>
<dbReference type="Pfam" id="PF08240">
    <property type="entry name" value="ADH_N"/>
    <property type="match status" value="1"/>
</dbReference>
<dbReference type="Pfam" id="PF00107">
    <property type="entry name" value="ADH_zinc_N"/>
    <property type="match status" value="1"/>
</dbReference>
<dbReference type="SMART" id="SM00829">
    <property type="entry name" value="PKS_ER"/>
    <property type="match status" value="1"/>
</dbReference>
<dbReference type="SUPFAM" id="SSF50129">
    <property type="entry name" value="GroES-like"/>
    <property type="match status" value="2"/>
</dbReference>
<dbReference type="SUPFAM" id="SSF51735">
    <property type="entry name" value="NAD(P)-binding Rossmann-fold domains"/>
    <property type="match status" value="1"/>
</dbReference>
<dbReference type="PROSITE" id="PS00059">
    <property type="entry name" value="ADH_ZINC"/>
    <property type="match status" value="1"/>
</dbReference>
<proteinExistence type="evidence at protein level"/>
<feature type="chain" id="PRO_0000160765" description="Alcohol dehydrogenase class-3">
    <location>
        <begin position="1"/>
        <end position="376"/>
    </location>
</feature>
<feature type="binding site" evidence="1">
    <location>
        <position position="47"/>
    </location>
    <ligand>
        <name>Zn(2+)</name>
        <dbReference type="ChEBI" id="CHEBI:29105"/>
        <label>1</label>
        <note>catalytic</note>
    </ligand>
</feature>
<feature type="binding site" evidence="1">
    <location>
        <position position="69"/>
    </location>
    <ligand>
        <name>Zn(2+)</name>
        <dbReference type="ChEBI" id="CHEBI:29105"/>
        <label>1</label>
        <note>catalytic</note>
    </ligand>
</feature>
<feature type="binding site" evidence="1">
    <location>
        <position position="99"/>
    </location>
    <ligand>
        <name>Zn(2+)</name>
        <dbReference type="ChEBI" id="CHEBI:29105"/>
        <label>2</label>
    </ligand>
</feature>
<feature type="binding site" evidence="1">
    <location>
        <position position="102"/>
    </location>
    <ligand>
        <name>Zn(2+)</name>
        <dbReference type="ChEBI" id="CHEBI:29105"/>
        <label>2</label>
    </ligand>
</feature>
<feature type="binding site" evidence="1">
    <location>
        <position position="105"/>
    </location>
    <ligand>
        <name>Zn(2+)</name>
        <dbReference type="ChEBI" id="CHEBI:29105"/>
        <label>2</label>
    </ligand>
</feature>
<feature type="binding site" evidence="1">
    <location>
        <position position="113"/>
    </location>
    <ligand>
        <name>Zn(2+)</name>
        <dbReference type="ChEBI" id="CHEBI:29105"/>
        <label>2</label>
    </ligand>
</feature>
<feature type="binding site" evidence="1">
    <location>
        <position position="176"/>
    </location>
    <ligand>
        <name>Zn(2+)</name>
        <dbReference type="ChEBI" id="CHEBI:29105"/>
        <label>1</label>
        <note>catalytic</note>
    </ligand>
</feature>
<feature type="site" description="Important for FDH activity and activation by fatty acids" evidence="1">
    <location>
        <position position="117"/>
    </location>
</feature>
<feature type="modified residue" description="N-acetylserine" evidence="3 4">
    <location>
        <position position="1"/>
    </location>
</feature>
<evidence type="ECO:0000250" key="1">
    <source>
        <dbReference type="UniProtKB" id="P11766"/>
    </source>
</evidence>
<evidence type="ECO:0000250" key="2">
    <source>
        <dbReference type="UniProtKB" id="P28474"/>
    </source>
</evidence>
<evidence type="ECO:0000269" key="3">
    <source>
    </source>
</evidence>
<evidence type="ECO:0000269" key="4">
    <source>
    </source>
</evidence>
<evidence type="ECO:0000305" key="5"/>
<protein>
    <recommendedName>
        <fullName>Alcohol dehydrogenase class-3</fullName>
        <ecNumber evidence="1">1.1.1.1</ecNumber>
    </recommendedName>
    <alternativeName>
        <fullName>Alcohol dehydrogenase class-III</fullName>
    </alternativeName>
    <alternativeName>
        <fullName>Glutathione-dependent formaldehyde dehydrogenase</fullName>
        <shortName>FALDH</shortName>
        <shortName>FDH</shortName>
        <shortName>GSH-FDH</shortName>
        <ecNumber>1.1.1.-</ecNumber>
    </alternativeName>
    <alternativeName>
        <fullName>S-(hydroxymethyl)glutathione dehydrogenase</fullName>
        <ecNumber evidence="1">1.1.1.284</ecNumber>
    </alternativeName>
</protein>
<name>ADHX_MYXGL</name>
<sequence>SKMDGQVIHCKAAVAWEAKKPLSLEEIEVAPPKAHEVRMKVLATAVCHTDAYTLSGVDPEGSFPVVLGHEGAGIVESVGEGVTKFKPGDSVIPLYIPQCGECKFCLNPKTNLCQKIRVTQGKGMMPDGTSRLTCRGKSLYHFMGASTFSEYAVVADISLCRVAPEAPPDRVCLLGCGVSTGYGAPLNTAKVEPGSTCAIFGLGAVGLAAIMGCRVAGASRIIAIDRNPDKFEKARIFGATDCVVPDASDKPISQVLGEMTDGGLDYTFECVGNVGIMRAALESCHKGWGVSVILGVAGGGQEISTRPFQLVTGRTWKGAAFGGWKSVESVPKLVDDYMAGKIMVDEFVSHSLPFDSINEAFDLMHAGKSIRTVLQL</sequence>
<organism>
    <name type="scientific">Myxine glutinosa</name>
    <name type="common">Atlantic hagfish</name>
    <dbReference type="NCBI Taxonomy" id="7769"/>
    <lineage>
        <taxon>Eukaryota</taxon>
        <taxon>Metazoa</taxon>
        <taxon>Chordata</taxon>
        <taxon>Craniata</taxon>
        <taxon>Vertebrata</taxon>
        <taxon>Cyclostomata</taxon>
        <taxon>Myxini</taxon>
        <taxon>Myxiniformes</taxon>
        <taxon>Myxinidae</taxon>
        <taxon>Myxininae</taxon>
        <taxon>Myxine</taxon>
    </lineage>
</organism>